<feature type="transit peptide" description="Mitochondrion" evidence="1">
    <location>
        <begin position="1"/>
        <end position="33"/>
    </location>
</feature>
<feature type="chain" id="PRO_0000356277" description="Acetyl-CoA acetyltransferase B, mitochondrial">
    <location>
        <begin position="34"/>
        <end position="420"/>
    </location>
</feature>
<feature type="active site" description="Acyl-thioester intermediate" evidence="2">
    <location>
        <position position="119"/>
    </location>
</feature>
<feature type="active site" description="Proton donor/acceptor" evidence="2">
    <location>
        <position position="406"/>
    </location>
</feature>
<feature type="binding site" evidence="2">
    <location>
        <position position="212"/>
    </location>
    <ligand>
        <name>CoA</name>
        <dbReference type="ChEBI" id="CHEBI:57287"/>
    </ligand>
</feature>
<feature type="binding site" evidence="2">
    <location>
        <position position="212"/>
    </location>
    <ligand>
        <name>K(+)</name>
        <dbReference type="ChEBI" id="CHEBI:29103"/>
    </ligand>
</feature>
<feature type="binding site" evidence="2">
    <location>
        <begin position="251"/>
        <end position="253"/>
    </location>
    <ligand>
        <name>CoA</name>
        <dbReference type="ChEBI" id="CHEBI:57287"/>
    </ligand>
</feature>
<feature type="binding site" evidence="2">
    <location>
        <position position="256"/>
    </location>
    <ligand>
        <name>CoA</name>
        <dbReference type="ChEBI" id="CHEBI:57287"/>
    </ligand>
</feature>
<feature type="binding site" evidence="2">
    <location>
        <position position="273"/>
    </location>
    <ligand>
        <name>K(+)</name>
        <dbReference type="ChEBI" id="CHEBI:29103"/>
    </ligand>
</feature>
<feature type="binding site" evidence="2">
    <location>
        <position position="274"/>
    </location>
    <ligand>
        <name>K(+)</name>
        <dbReference type="ChEBI" id="CHEBI:29103"/>
    </ligand>
</feature>
<feature type="binding site" evidence="2">
    <location>
        <position position="277"/>
    </location>
    <ligand>
        <name>CoA</name>
        <dbReference type="ChEBI" id="CHEBI:57287"/>
    </ligand>
</feature>
<feature type="binding site" evidence="2">
    <location>
        <position position="374"/>
    </location>
    <ligand>
        <name>K(+)</name>
        <dbReference type="ChEBI" id="CHEBI:29103"/>
    </ligand>
</feature>
<feature type="site" description="Increases nucleophilicity of active site Cys" evidence="2">
    <location>
        <position position="378"/>
    </location>
</feature>
<keyword id="KW-0012">Acyltransferase</keyword>
<keyword id="KW-0276">Fatty acid metabolism</keyword>
<keyword id="KW-0443">Lipid metabolism</keyword>
<keyword id="KW-0479">Metal-binding</keyword>
<keyword id="KW-0496">Mitochondrion</keyword>
<keyword id="KW-0630">Potassium</keyword>
<keyword id="KW-1185">Reference proteome</keyword>
<keyword id="KW-0808">Transferase</keyword>
<keyword id="KW-0809">Transit peptide</keyword>
<proteinExistence type="evidence at transcript level"/>
<comment type="function">
    <text evidence="2">This is one of the enzymes that catalyzes the last step of the mitochondrial beta-oxidation pathway, an aerobic process breaking down fatty acids into acetyl-CoA. Using free coenzyme A/CoA, catalyzes the thiolytic cleavage of medium- to long-chain 3-oxoacyl-CoAs into acetyl-CoA and a fatty acyl-CoA shortened by two carbon atoms. The activity of the enzyme is reversible and it can also catalyze the condensation of two acetyl-CoA molecules into acetoacetyl-CoA. Thereby, it plays a major role in ketone body metabolism.</text>
</comment>
<comment type="catalytic activity">
    <reaction evidence="3">
        <text>2 acetyl-CoA = acetoacetyl-CoA + CoA</text>
        <dbReference type="Rhea" id="RHEA:21036"/>
        <dbReference type="ChEBI" id="CHEBI:57286"/>
        <dbReference type="ChEBI" id="CHEBI:57287"/>
        <dbReference type="ChEBI" id="CHEBI:57288"/>
        <dbReference type="EC" id="2.3.1.9"/>
    </reaction>
    <physiologicalReaction direction="left-to-right" evidence="2">
        <dbReference type="Rhea" id="RHEA:21037"/>
    </physiologicalReaction>
    <physiologicalReaction direction="right-to-left" evidence="2">
        <dbReference type="Rhea" id="RHEA:21038"/>
    </physiologicalReaction>
</comment>
<comment type="catalytic activity">
    <reaction evidence="2">
        <text>propanoyl-CoA + acetyl-CoA = 2-methyl-3-oxobutanoyl-CoA + CoA</text>
        <dbReference type="Rhea" id="RHEA:30719"/>
        <dbReference type="ChEBI" id="CHEBI:57287"/>
        <dbReference type="ChEBI" id="CHEBI:57288"/>
        <dbReference type="ChEBI" id="CHEBI:57335"/>
        <dbReference type="ChEBI" id="CHEBI:57392"/>
    </reaction>
    <physiologicalReaction direction="left-to-right" evidence="2">
        <dbReference type="Rhea" id="RHEA:30720"/>
    </physiologicalReaction>
    <physiologicalReaction direction="right-to-left" evidence="2">
        <dbReference type="Rhea" id="RHEA:30721"/>
    </physiologicalReaction>
</comment>
<comment type="pathway">
    <text evidence="2">Lipid metabolism; fatty acid beta-oxidation.</text>
</comment>
<comment type="subunit">
    <text evidence="2">Homotetramer.</text>
</comment>
<comment type="subcellular location">
    <subcellularLocation>
        <location evidence="2">Mitochondrion</location>
    </subcellularLocation>
</comment>
<comment type="similarity">
    <text evidence="4">Belongs to the thiolase-like superfamily. Thiolase family.</text>
</comment>
<evidence type="ECO:0000250" key="1">
    <source>
        <dbReference type="UniProtKB" id="P17764"/>
    </source>
</evidence>
<evidence type="ECO:0000250" key="2">
    <source>
        <dbReference type="UniProtKB" id="P24752"/>
    </source>
</evidence>
<evidence type="ECO:0000255" key="3">
    <source>
        <dbReference type="PROSITE-ProRule" id="PRU10020"/>
    </source>
</evidence>
<evidence type="ECO:0000305" key="4"/>
<gene>
    <name type="primary">acat1-b</name>
</gene>
<reference key="1">
    <citation type="submission" date="2004-06" db="EMBL/GenBank/DDBJ databases">
        <authorList>
            <consortium name="NIH - Xenopus Gene Collection (XGC) project"/>
        </authorList>
    </citation>
    <scope>NUCLEOTIDE SEQUENCE [LARGE SCALE MRNA]</scope>
    <source>
        <tissue>Oocyte</tissue>
    </source>
</reference>
<sequence>MAFCGPRTAARLSHSTRALHYTHRSFASPRTLNEVVIASAARTPIGSFQGTLSSLPATKLGSIAIKAAVERAGIPADEVKEVYMGNVLQAGQGQAPSRQATLGAGLAISTPTTTINKVCASGMKSVMLAAQSLMCGHQQVMVAGGMESMSNVPYCMSRGATPYGGVKLEDIIVKDGLTDVYNKFHMGNCAENTAKKLSISREEQDGFAITSYTRSKAAWDSGLIANEIAPVTIAQKGKPDIIVQEDEEYKRVDFSKFPKLKTVFQKDNGTVTAANSSTLNDGAAALVLMTAEAANRLNVTPLARIVAFADAAVDPIDFPIAPAYAIPKLLSEAGLKKEDIAMWEINEAFSVVVLANIKMLDIDPARVNVNGGAVSLGHPIGMSGARIVGHMAHALRKGQFGIAGICNGGGGASAVLIEKL</sequence>
<dbReference type="EC" id="2.3.1.9" evidence="2"/>
<dbReference type="EMBL" id="BC073720">
    <property type="protein sequence ID" value="AAH73720.1"/>
    <property type="molecule type" value="mRNA"/>
</dbReference>
<dbReference type="RefSeq" id="NP_001086028.1">
    <property type="nucleotide sequence ID" value="NM_001092559.1"/>
</dbReference>
<dbReference type="SMR" id="Q6GN02"/>
<dbReference type="DNASU" id="444457"/>
<dbReference type="GeneID" id="444457"/>
<dbReference type="KEGG" id="xla:444457"/>
<dbReference type="AGR" id="Xenbase:XB-GENE-17333679"/>
<dbReference type="CTD" id="444457"/>
<dbReference type="Xenbase" id="XB-GENE-17333679">
    <property type="gene designation" value="acat1.S"/>
</dbReference>
<dbReference type="OrthoDB" id="5404651at2759"/>
<dbReference type="UniPathway" id="UPA00659"/>
<dbReference type="Proteomes" id="UP000186698">
    <property type="component" value="Chromosome 2S"/>
</dbReference>
<dbReference type="Bgee" id="444457">
    <property type="expression patterns" value="Expressed in oocyte and 19 other cell types or tissues"/>
</dbReference>
<dbReference type="GO" id="GO:0005739">
    <property type="term" value="C:mitochondrion"/>
    <property type="evidence" value="ECO:0000318"/>
    <property type="project" value="GO_Central"/>
</dbReference>
<dbReference type="GO" id="GO:0003985">
    <property type="term" value="F:acetyl-CoA C-acetyltransferase activity"/>
    <property type="evidence" value="ECO:0000318"/>
    <property type="project" value="GO_Central"/>
</dbReference>
<dbReference type="GO" id="GO:0046872">
    <property type="term" value="F:metal ion binding"/>
    <property type="evidence" value="ECO:0007669"/>
    <property type="project" value="UniProtKB-KW"/>
</dbReference>
<dbReference type="GO" id="GO:0006635">
    <property type="term" value="P:fatty acid beta-oxidation"/>
    <property type="evidence" value="ECO:0007669"/>
    <property type="project" value="UniProtKB-UniPathway"/>
</dbReference>
<dbReference type="CDD" id="cd00751">
    <property type="entry name" value="thiolase"/>
    <property type="match status" value="1"/>
</dbReference>
<dbReference type="FunFam" id="3.40.47.10:FF:000007">
    <property type="entry name" value="acetyl-CoA acetyltransferase, mitochondrial"/>
    <property type="match status" value="1"/>
</dbReference>
<dbReference type="Gene3D" id="3.40.47.10">
    <property type="match status" value="1"/>
</dbReference>
<dbReference type="InterPro" id="IPR002155">
    <property type="entry name" value="Thiolase"/>
</dbReference>
<dbReference type="InterPro" id="IPR016039">
    <property type="entry name" value="Thiolase-like"/>
</dbReference>
<dbReference type="InterPro" id="IPR020615">
    <property type="entry name" value="Thiolase_acyl_enz_int_AS"/>
</dbReference>
<dbReference type="InterPro" id="IPR020610">
    <property type="entry name" value="Thiolase_AS"/>
</dbReference>
<dbReference type="InterPro" id="IPR020617">
    <property type="entry name" value="Thiolase_C"/>
</dbReference>
<dbReference type="InterPro" id="IPR020613">
    <property type="entry name" value="Thiolase_CS"/>
</dbReference>
<dbReference type="InterPro" id="IPR020616">
    <property type="entry name" value="Thiolase_N"/>
</dbReference>
<dbReference type="NCBIfam" id="TIGR01930">
    <property type="entry name" value="AcCoA-C-Actrans"/>
    <property type="match status" value="1"/>
</dbReference>
<dbReference type="PANTHER" id="PTHR18919:SF156">
    <property type="entry name" value="ACETYL-COA ACETYLTRANSFERASE, MITOCHONDRIAL"/>
    <property type="match status" value="1"/>
</dbReference>
<dbReference type="PANTHER" id="PTHR18919">
    <property type="entry name" value="ACETYL-COA C-ACYLTRANSFERASE"/>
    <property type="match status" value="1"/>
</dbReference>
<dbReference type="Pfam" id="PF02803">
    <property type="entry name" value="Thiolase_C"/>
    <property type="match status" value="1"/>
</dbReference>
<dbReference type="Pfam" id="PF00108">
    <property type="entry name" value="Thiolase_N"/>
    <property type="match status" value="1"/>
</dbReference>
<dbReference type="PIRSF" id="PIRSF000429">
    <property type="entry name" value="Ac-CoA_Ac_transf"/>
    <property type="match status" value="1"/>
</dbReference>
<dbReference type="SUPFAM" id="SSF53901">
    <property type="entry name" value="Thiolase-like"/>
    <property type="match status" value="2"/>
</dbReference>
<dbReference type="PROSITE" id="PS00098">
    <property type="entry name" value="THIOLASE_1"/>
    <property type="match status" value="1"/>
</dbReference>
<dbReference type="PROSITE" id="PS00737">
    <property type="entry name" value="THIOLASE_2"/>
    <property type="match status" value="1"/>
</dbReference>
<dbReference type="PROSITE" id="PS00099">
    <property type="entry name" value="THIOLASE_3"/>
    <property type="match status" value="1"/>
</dbReference>
<protein>
    <recommendedName>
        <fullName>Acetyl-CoA acetyltransferase B, mitochondrial</fullName>
        <ecNumber evidence="2">2.3.1.9</ecNumber>
    </recommendedName>
    <alternativeName>
        <fullName>Acetoacetyl-CoA thiolase B</fullName>
    </alternativeName>
</protein>
<accession>Q6GN02</accession>
<name>THILB_XENLA</name>
<organism>
    <name type="scientific">Xenopus laevis</name>
    <name type="common">African clawed frog</name>
    <dbReference type="NCBI Taxonomy" id="8355"/>
    <lineage>
        <taxon>Eukaryota</taxon>
        <taxon>Metazoa</taxon>
        <taxon>Chordata</taxon>
        <taxon>Craniata</taxon>
        <taxon>Vertebrata</taxon>
        <taxon>Euteleostomi</taxon>
        <taxon>Amphibia</taxon>
        <taxon>Batrachia</taxon>
        <taxon>Anura</taxon>
        <taxon>Pipoidea</taxon>
        <taxon>Pipidae</taxon>
        <taxon>Xenopodinae</taxon>
        <taxon>Xenopus</taxon>
        <taxon>Xenopus</taxon>
    </lineage>
</organism>